<gene>
    <name evidence="4" type="primary">sorM</name>
</gene>
<sequence length="274" mass="29196">MEQKKITQGDLVSMFLRSNLQQASFNFERIHGLGFCYDMIPAIKRLYPLKADQVAALKRHLVFFNTTPAVCGPVIAVTAAMEEARANGAAIDDGAINGIKVGLMGPLAGVGDPLVWGTLRPITAALGASLALSGNILGPLLFFFIFNAVRLAMKWYGLQLGFRKGVNIVSDMGGNLLQKLTEGASILGLFVMGVLVTKWTTINVPLVVSQTPGADGATVTMTVQNILDQLCPGLLALGLTLLMVRLLNKKVNPVWLIFALFGLGIIGNALGFLS</sequence>
<feature type="chain" id="PRO_0000186664" description="PTS system sorbose-specific EIID component">
    <location>
        <begin position="1"/>
        <end position="274"/>
    </location>
</feature>
<feature type="transmembrane region" description="Helical" evidence="1">
    <location>
        <begin position="61"/>
        <end position="81"/>
    </location>
</feature>
<feature type="transmembrane region" description="Helical" evidence="1">
    <location>
        <begin position="99"/>
        <end position="119"/>
    </location>
</feature>
<feature type="transmembrane region" description="Helical" evidence="1">
    <location>
        <begin position="126"/>
        <end position="146"/>
    </location>
</feature>
<feature type="transmembrane region" description="Helical" evidence="1">
    <location>
        <begin position="186"/>
        <end position="206"/>
    </location>
</feature>
<feature type="transmembrane region" description="Helical" evidence="1">
    <location>
        <begin position="226"/>
        <end position="246"/>
    </location>
</feature>
<feature type="transmembrane region" description="Helical" evidence="1">
    <location>
        <begin position="253"/>
        <end position="273"/>
    </location>
</feature>
<feature type="domain" description="PTS EIID" evidence="1">
    <location>
        <begin position="4"/>
        <end position="273"/>
    </location>
</feature>
<comment type="function">
    <text evidence="3 5 7">The phosphoenolpyruvate-dependent sugar phosphotransferase system (PTS), a major carbohydrate active transport system, catalyzes the phosphorylation of incoming sugar substrates concomitant with their translocation across the cell membrane. The enzyme II SorABFM PTS system is involved in sorbose transport.</text>
</comment>
<comment type="subcellular location">
    <subcellularLocation>
        <location evidence="6">Cell inner membrane</location>
        <topology evidence="1">Multi-pass membrane protein</topology>
    </subcellularLocation>
</comment>
<comment type="induction">
    <text evidence="2">By L-sorbose.</text>
</comment>
<comment type="domain">
    <text evidence="1">The EIID domain, with its homologous EIIC domain, forms the PTS system translocation channel and contains part of its specific substrate-binding site.</text>
</comment>
<reference key="1">
    <citation type="journal article" date="1994" name="Biochim. Biophys. Acta">
        <title>Sequence of the sor-operon for L-sorbose utilization from Klebsiella pneumoniae KAY2026.</title>
        <authorList>
            <person name="Wehmeier U.F."/>
            <person name="Lengeler J.W."/>
        </authorList>
    </citation>
    <scope>NUCLEOTIDE SEQUENCE [GENOMIC DNA]</scope>
    <scope>FUNCTION</scope>
    <source>
        <strain>1033-5P14 / KAY2026</strain>
    </source>
</reference>
<reference key="2">
    <citation type="journal article" date="1995" name="Mol. Gen. Genet.">
        <title>Molecular analysis of the phosphoenolpyruvate-dependent L-sorbose: phosphotransferase system from Klebsiella pneumoniae and of its multidomain structure.</title>
        <authorList>
            <person name="Wehmeier U.F."/>
            <person name="Wohrl B.M."/>
            <person name="Lengeler J.W."/>
        </authorList>
    </citation>
    <scope>NUCLEOTIDE SEQUENCE [GENOMIC DNA]</scope>
</reference>
<reference key="3">
    <citation type="journal article" date="1984" name="J. Bacteriol.">
        <title>L-Sorbose metabolism in Klebsiella pneumoniae and Sor+ derivatives of Escherichia coli K-12 and chemotaxis toward sorbose.</title>
        <authorList>
            <person name="Sprenger G.A."/>
            <person name="Lengeler J.W."/>
        </authorList>
    </citation>
    <scope>FUNCTION</scope>
    <scope>SUBCELLULAR LOCATION</scope>
    <source>
        <strain>1033-5P14 / KAY2026</strain>
    </source>
</reference>
<reference key="4">
    <citation type="journal article" date="1990" name="Mol. Microbiol.">
        <title>Cloning and physical mapping of the sor genes for L-sorbose transport and metabolism from Klebsiella pneumoniae.</title>
        <authorList>
            <person name="Woehrl B.M."/>
            <person name="Lengeler J.W."/>
        </authorList>
    </citation>
    <scope>FUNCTION</scope>
    <scope>INDUCTION</scope>
</reference>
<accession>P37083</accession>
<dbReference type="EMBL" id="X66059">
    <property type="protein sequence ID" value="CAA46860.1"/>
    <property type="molecule type" value="Genomic_DNA"/>
</dbReference>
<dbReference type="PIR" id="S50190">
    <property type="entry name" value="S50190"/>
</dbReference>
<dbReference type="SMR" id="P37083"/>
<dbReference type="TCDB" id="4.A.6.1.3">
    <property type="family name" value="the pts mannose-fructose-sorbose (man) family"/>
</dbReference>
<dbReference type="GO" id="GO:0005886">
    <property type="term" value="C:plasma membrane"/>
    <property type="evidence" value="ECO:0007669"/>
    <property type="project" value="UniProtKB-SubCell"/>
</dbReference>
<dbReference type="GO" id="GO:0009401">
    <property type="term" value="P:phosphoenolpyruvate-dependent sugar phosphotransferase system"/>
    <property type="evidence" value="ECO:0007669"/>
    <property type="project" value="UniProtKB-KW"/>
</dbReference>
<dbReference type="InterPro" id="IPR050303">
    <property type="entry name" value="GatZ_KbaZ_carbometab"/>
</dbReference>
<dbReference type="InterPro" id="IPR004704">
    <property type="entry name" value="PTS_IID_man"/>
</dbReference>
<dbReference type="NCBIfam" id="TIGR00828">
    <property type="entry name" value="EIID-AGA"/>
    <property type="match status" value="1"/>
</dbReference>
<dbReference type="NCBIfam" id="NF008315">
    <property type="entry name" value="PRK11103.1"/>
    <property type="match status" value="1"/>
</dbReference>
<dbReference type="PANTHER" id="PTHR32502">
    <property type="entry name" value="N-ACETYLGALACTOSAMINE PERMEASE II COMPONENT-RELATED"/>
    <property type="match status" value="1"/>
</dbReference>
<dbReference type="PANTHER" id="PTHR32502:SF5">
    <property type="entry name" value="N-ACETYLGALACTOSAMINE PERMEASE IID COMPONENT-RELATED"/>
    <property type="match status" value="1"/>
</dbReference>
<dbReference type="Pfam" id="PF03613">
    <property type="entry name" value="EIID-AGA"/>
    <property type="match status" value="1"/>
</dbReference>
<dbReference type="PROSITE" id="PS51108">
    <property type="entry name" value="PTS_EIID"/>
    <property type="match status" value="1"/>
</dbReference>
<proteinExistence type="evidence at transcript level"/>
<name>PTRD_KLEPN</name>
<organism>
    <name type="scientific">Klebsiella pneumoniae</name>
    <dbReference type="NCBI Taxonomy" id="573"/>
    <lineage>
        <taxon>Bacteria</taxon>
        <taxon>Pseudomonadati</taxon>
        <taxon>Pseudomonadota</taxon>
        <taxon>Gammaproteobacteria</taxon>
        <taxon>Enterobacterales</taxon>
        <taxon>Enterobacteriaceae</taxon>
        <taxon>Klebsiella/Raoultella group</taxon>
        <taxon>Klebsiella</taxon>
        <taxon>Klebsiella pneumoniae complex</taxon>
    </lineage>
</organism>
<protein>
    <recommendedName>
        <fullName evidence="4">PTS system sorbose-specific EIID component</fullName>
    </recommendedName>
    <alternativeName>
        <fullName evidence="4">EIID-Sor</fullName>
    </alternativeName>
    <alternativeName>
        <fullName evidence="4">Sorbose permease IID component</fullName>
    </alternativeName>
</protein>
<keyword id="KW-0997">Cell inner membrane</keyword>
<keyword id="KW-1003">Cell membrane</keyword>
<keyword id="KW-0472">Membrane</keyword>
<keyword id="KW-0598">Phosphotransferase system</keyword>
<keyword id="KW-0762">Sugar transport</keyword>
<keyword id="KW-0812">Transmembrane</keyword>
<keyword id="KW-1133">Transmembrane helix</keyword>
<keyword id="KW-0813">Transport</keyword>
<evidence type="ECO:0000255" key="1">
    <source>
        <dbReference type="PROSITE-ProRule" id="PRU00431"/>
    </source>
</evidence>
<evidence type="ECO:0000269" key="2">
    <source>
    </source>
</evidence>
<evidence type="ECO:0000269" key="3">
    <source>
    </source>
</evidence>
<evidence type="ECO:0000303" key="4">
    <source>
    </source>
</evidence>
<evidence type="ECO:0000305" key="5">
    <source>
    </source>
</evidence>
<evidence type="ECO:0000305" key="6">
    <source>
    </source>
</evidence>
<evidence type="ECO:0000305" key="7">
    <source>
    </source>
</evidence>